<protein>
    <recommendedName>
        <fullName>Uncharacterized protein aq_668</fullName>
    </recommendedName>
</protein>
<name>Y668_AQUAE</name>
<gene>
    <name type="ordered locus">aq_668</name>
</gene>
<dbReference type="EMBL" id="AE000657">
    <property type="protein sequence ID" value="AAC06865.1"/>
    <property type="molecule type" value="Genomic_DNA"/>
</dbReference>
<dbReference type="PIR" id="G70358">
    <property type="entry name" value="G70358"/>
</dbReference>
<dbReference type="RefSeq" id="NP_213459.1">
    <property type="nucleotide sequence ID" value="NC_000918.1"/>
</dbReference>
<dbReference type="RefSeq" id="WP_010880397.1">
    <property type="nucleotide sequence ID" value="NC_000918.1"/>
</dbReference>
<dbReference type="SMR" id="O66899"/>
<dbReference type="STRING" id="224324.aq_668"/>
<dbReference type="EnsemblBacteria" id="AAC06865">
    <property type="protein sequence ID" value="AAC06865"/>
    <property type="gene ID" value="aq_668"/>
</dbReference>
<dbReference type="KEGG" id="aae:aq_668"/>
<dbReference type="HOGENOM" id="CLU_2208802_0_0_0"/>
<dbReference type="InParanoid" id="O66899"/>
<dbReference type="OrthoDB" id="15402at2"/>
<dbReference type="Proteomes" id="UP000000798">
    <property type="component" value="Chromosome"/>
</dbReference>
<dbReference type="CDD" id="cd02965">
    <property type="entry name" value="HyaE"/>
    <property type="match status" value="1"/>
</dbReference>
<dbReference type="Gene3D" id="3.40.30.10">
    <property type="entry name" value="Glutaredoxin"/>
    <property type="match status" value="1"/>
</dbReference>
<dbReference type="InterPro" id="IPR010893">
    <property type="entry name" value="NiFe-hyd_mat_HyaE"/>
</dbReference>
<dbReference type="InterPro" id="IPR036249">
    <property type="entry name" value="Thioredoxin-like_sf"/>
</dbReference>
<dbReference type="Pfam" id="PF07449">
    <property type="entry name" value="HyaE"/>
    <property type="match status" value="1"/>
</dbReference>
<dbReference type="SUPFAM" id="SSF52833">
    <property type="entry name" value="Thioredoxin-like"/>
    <property type="match status" value="1"/>
</dbReference>
<keyword id="KW-1185">Reference proteome</keyword>
<feature type="chain" id="PRO_0000186874" description="Uncharacterized protein aq_668">
    <location>
        <begin position="1"/>
        <end position="112"/>
    </location>
</feature>
<organism>
    <name type="scientific">Aquifex aeolicus (strain VF5)</name>
    <dbReference type="NCBI Taxonomy" id="224324"/>
    <lineage>
        <taxon>Bacteria</taxon>
        <taxon>Pseudomonadati</taxon>
        <taxon>Aquificota</taxon>
        <taxon>Aquificia</taxon>
        <taxon>Aquificales</taxon>
        <taxon>Aquificaceae</taxon>
        <taxon>Aquifex</taxon>
    </lineage>
</organism>
<reference key="1">
    <citation type="journal article" date="1998" name="Nature">
        <title>The complete genome of the hyperthermophilic bacterium Aquifex aeolicus.</title>
        <authorList>
            <person name="Deckert G."/>
            <person name="Warren P.V."/>
            <person name="Gaasterland T."/>
            <person name="Young W.G."/>
            <person name="Lenox A.L."/>
            <person name="Graham D.E."/>
            <person name="Overbeek R."/>
            <person name="Snead M.A."/>
            <person name="Keller M."/>
            <person name="Aujay M."/>
            <person name="Huber R."/>
            <person name="Feldman R.A."/>
            <person name="Short J.M."/>
            <person name="Olsen G.J."/>
            <person name="Swanson R.V."/>
        </authorList>
    </citation>
    <scope>NUCLEOTIDE SEQUENCE [LARGE SCALE GENOMIC DNA]</scope>
    <source>
        <strain>VF5</strain>
    </source>
</reference>
<proteinExistence type="predicted"/>
<sequence length="112" mass="13180">MSSVKFLQNLKRINEEDLRNLMEKGETFVLYVRSERLYDKVKEIFDVDVVFPELAKSFEGIPFYWGDADELKELNVIPPSVLIFKEGKPVEFLQGIKTWAEYTRKLKESLLC</sequence>
<accession>O66899</accession>